<reference key="1">
    <citation type="submission" date="2005-06" db="EMBL/GenBank/DDBJ databases">
        <title>DNA sequences of macaque genes expressed in brain or testis and its evolutionary implications.</title>
        <authorList>
            <consortium name="International consortium for macaque cDNA sequencing and analysis"/>
        </authorList>
    </citation>
    <scope>NUCLEOTIDE SEQUENCE [LARGE SCALE MRNA]</scope>
    <source>
        <tissue>Testis</tissue>
    </source>
</reference>
<evidence type="ECO:0000250" key="1"/>
<evidence type="ECO:0000250" key="2">
    <source>
        <dbReference type="UniProtKB" id="P43304"/>
    </source>
</evidence>
<evidence type="ECO:0000250" key="3">
    <source>
        <dbReference type="UniProtKB" id="Q64521"/>
    </source>
</evidence>
<evidence type="ECO:0000255" key="4"/>
<evidence type="ECO:0000255" key="5">
    <source>
        <dbReference type="PROSITE-ProRule" id="PRU00448"/>
    </source>
</evidence>
<evidence type="ECO:0000305" key="6"/>
<keyword id="KW-0106">Calcium</keyword>
<keyword id="KW-0274">FAD</keyword>
<keyword id="KW-0285">Flavoprotein</keyword>
<keyword id="KW-0479">Metal-binding</keyword>
<keyword id="KW-0496">Mitochondrion</keyword>
<keyword id="KW-0560">Oxidoreductase</keyword>
<keyword id="KW-0597">Phosphoprotein</keyword>
<keyword id="KW-1185">Reference proteome</keyword>
<keyword id="KW-0677">Repeat</keyword>
<keyword id="KW-0809">Transit peptide</keyword>
<accession>Q4R755</accession>
<feature type="transit peptide" description="Mitochondrion" evidence="1">
    <location>
        <begin position="1"/>
        <end position="42"/>
    </location>
</feature>
<feature type="chain" id="PRO_0000270069" description="Glycerol-3-phosphate dehydrogenase, mitochondrial">
    <location>
        <begin position="43"/>
        <end position="727"/>
    </location>
</feature>
<feature type="domain" description="EF-hand 1" evidence="5">
    <location>
        <begin position="623"/>
        <end position="658"/>
    </location>
</feature>
<feature type="domain" description="EF-hand 2" evidence="5">
    <location>
        <begin position="659"/>
        <end position="694"/>
    </location>
</feature>
<feature type="binding site" evidence="4">
    <location>
        <begin position="71"/>
        <end position="99"/>
    </location>
    <ligand>
        <name>FAD</name>
        <dbReference type="ChEBI" id="CHEBI:57692"/>
    </ligand>
</feature>
<feature type="binding site" evidence="5">
    <location>
        <position position="672"/>
    </location>
    <ligand>
        <name>Ca(2+)</name>
        <dbReference type="ChEBI" id="CHEBI:29108"/>
    </ligand>
</feature>
<feature type="binding site" evidence="5">
    <location>
        <position position="674"/>
    </location>
    <ligand>
        <name>Ca(2+)</name>
        <dbReference type="ChEBI" id="CHEBI:29108"/>
    </ligand>
</feature>
<feature type="binding site" evidence="5">
    <location>
        <position position="676"/>
    </location>
    <ligand>
        <name>Ca(2+)</name>
        <dbReference type="ChEBI" id="CHEBI:29108"/>
    </ligand>
</feature>
<feature type="binding site" evidence="5">
    <location>
        <position position="678"/>
    </location>
    <ligand>
        <name>Ca(2+)</name>
        <dbReference type="ChEBI" id="CHEBI:29108"/>
    </ligand>
</feature>
<feature type="binding site" evidence="5">
    <location>
        <position position="683"/>
    </location>
    <ligand>
        <name>Ca(2+)</name>
        <dbReference type="ChEBI" id="CHEBI:29108"/>
    </ligand>
</feature>
<feature type="modified residue" description="Phosphotyrosine" evidence="3">
    <location>
        <position position="601"/>
    </location>
</feature>
<protein>
    <recommendedName>
        <fullName>Glycerol-3-phosphate dehydrogenase, mitochondrial</fullName>
        <shortName>GPD-M</shortName>
        <shortName>GPDH-M</shortName>
        <ecNumber evidence="2">1.1.5.3</ecNumber>
    </recommendedName>
    <alternativeName>
        <fullName>mtGPD</fullName>
    </alternativeName>
</protein>
<comment type="function">
    <text evidence="2">Calcium-responsive mitochondrial glycerol-3-phosphate dehydrogenase which seems to be a key component of the pancreatic beta-cell glucose-sensing device.</text>
</comment>
<comment type="catalytic activity">
    <reaction evidence="2">
        <text>a quinone + sn-glycerol 3-phosphate = dihydroxyacetone phosphate + a quinol</text>
        <dbReference type="Rhea" id="RHEA:18977"/>
        <dbReference type="ChEBI" id="CHEBI:24646"/>
        <dbReference type="ChEBI" id="CHEBI:57597"/>
        <dbReference type="ChEBI" id="CHEBI:57642"/>
        <dbReference type="ChEBI" id="CHEBI:132124"/>
        <dbReference type="EC" id="1.1.5.3"/>
    </reaction>
    <physiologicalReaction direction="left-to-right" evidence="2">
        <dbReference type="Rhea" id="RHEA:18978"/>
    </physiologicalReaction>
</comment>
<comment type="cofactor">
    <cofactor evidence="1">
        <name>FAD</name>
        <dbReference type="ChEBI" id="CHEBI:57692"/>
    </cofactor>
</comment>
<comment type="activity regulation">
    <text evidence="2">Calcium-binding enhance the activity of the enzyme.</text>
</comment>
<comment type="pathway">
    <text>Polyol metabolism; glycerol degradation via glycerol kinase pathway; glycerone phosphate from sn-glycerol 3-phosphate (aerobic route): step 1/1.</text>
</comment>
<comment type="subcellular location">
    <subcellularLocation>
        <location evidence="1">Mitochondrion</location>
    </subcellularLocation>
</comment>
<comment type="similarity">
    <text evidence="6">Belongs to the FAD-dependent glycerol-3-phosphate dehydrogenase family.</text>
</comment>
<dbReference type="EC" id="1.1.5.3" evidence="2"/>
<dbReference type="EMBL" id="AB168970">
    <property type="protein sequence ID" value="BAE01068.1"/>
    <property type="molecule type" value="mRNA"/>
</dbReference>
<dbReference type="RefSeq" id="NP_001306361.1">
    <property type="nucleotide sequence ID" value="NM_001319432.1"/>
</dbReference>
<dbReference type="SMR" id="Q4R755"/>
<dbReference type="STRING" id="9541.ENSMFAP00000016997"/>
<dbReference type="eggNOG" id="KOG0042">
    <property type="taxonomic scope" value="Eukaryota"/>
</dbReference>
<dbReference type="UniPathway" id="UPA00618">
    <property type="reaction ID" value="UER00674"/>
</dbReference>
<dbReference type="Proteomes" id="UP000233100">
    <property type="component" value="Unplaced"/>
</dbReference>
<dbReference type="GO" id="GO:0005739">
    <property type="term" value="C:mitochondrion"/>
    <property type="evidence" value="ECO:0007669"/>
    <property type="project" value="UniProtKB-SubCell"/>
</dbReference>
<dbReference type="GO" id="GO:0005509">
    <property type="term" value="F:calcium ion binding"/>
    <property type="evidence" value="ECO:0007669"/>
    <property type="project" value="InterPro"/>
</dbReference>
<dbReference type="GO" id="GO:0004368">
    <property type="term" value="F:glycerol-3-phosphate dehydrogenase (quinone) activity"/>
    <property type="evidence" value="ECO:0007669"/>
    <property type="project" value="UniProtKB-EC"/>
</dbReference>
<dbReference type="GO" id="GO:0019563">
    <property type="term" value="P:glycerol catabolic process"/>
    <property type="evidence" value="ECO:0007669"/>
    <property type="project" value="UniProtKB-UniPathway"/>
</dbReference>
<dbReference type="GO" id="GO:0006072">
    <property type="term" value="P:glycerol-3-phosphate metabolic process"/>
    <property type="evidence" value="ECO:0007669"/>
    <property type="project" value="InterPro"/>
</dbReference>
<dbReference type="GO" id="GO:0006734">
    <property type="term" value="P:NADH metabolic process"/>
    <property type="evidence" value="ECO:0007669"/>
    <property type="project" value="UniProtKB-ARBA"/>
</dbReference>
<dbReference type="CDD" id="cd00051">
    <property type="entry name" value="EFh"/>
    <property type="match status" value="1"/>
</dbReference>
<dbReference type="FunFam" id="1.10.238.10:FF:000155">
    <property type="entry name" value="Glycerol-3-phosphate dehydrogenase"/>
    <property type="match status" value="1"/>
</dbReference>
<dbReference type="FunFam" id="1.10.8.870:FF:000001">
    <property type="entry name" value="Glycerol-3-phosphate dehydrogenase"/>
    <property type="match status" value="1"/>
</dbReference>
<dbReference type="FunFam" id="3.30.9.10:FF:000037">
    <property type="entry name" value="Glycerol-3-phosphate dehydrogenase"/>
    <property type="match status" value="1"/>
</dbReference>
<dbReference type="FunFam" id="3.50.50.60:FF:000449">
    <property type="entry name" value="Glycerol-3-phosphate dehydrogenase, mitochondrial"/>
    <property type="match status" value="1"/>
</dbReference>
<dbReference type="Gene3D" id="1.10.8.870">
    <property type="entry name" value="Alpha-glycerophosphate oxidase, cap domain"/>
    <property type="match status" value="1"/>
</dbReference>
<dbReference type="Gene3D" id="3.30.9.10">
    <property type="entry name" value="D-Amino Acid Oxidase, subunit A, domain 2"/>
    <property type="match status" value="1"/>
</dbReference>
<dbReference type="Gene3D" id="1.10.238.10">
    <property type="entry name" value="EF-hand"/>
    <property type="match status" value="1"/>
</dbReference>
<dbReference type="Gene3D" id="3.50.50.60">
    <property type="entry name" value="FAD/NAD(P)-binding domain"/>
    <property type="match status" value="1"/>
</dbReference>
<dbReference type="InterPro" id="IPR031656">
    <property type="entry name" value="DAO_C"/>
</dbReference>
<dbReference type="InterPro" id="IPR038299">
    <property type="entry name" value="DAO_C_sf"/>
</dbReference>
<dbReference type="InterPro" id="IPR011992">
    <property type="entry name" value="EF-hand-dom_pair"/>
</dbReference>
<dbReference type="InterPro" id="IPR018247">
    <property type="entry name" value="EF_Hand_1_Ca_BS"/>
</dbReference>
<dbReference type="InterPro" id="IPR002048">
    <property type="entry name" value="EF_hand_dom"/>
</dbReference>
<dbReference type="InterPro" id="IPR006076">
    <property type="entry name" value="FAD-dep_OxRdtase"/>
</dbReference>
<dbReference type="InterPro" id="IPR036188">
    <property type="entry name" value="FAD/NAD-bd_sf"/>
</dbReference>
<dbReference type="InterPro" id="IPR000447">
    <property type="entry name" value="G3P_DH_FAD-dep"/>
</dbReference>
<dbReference type="PANTHER" id="PTHR11985">
    <property type="entry name" value="GLYCEROL-3-PHOSPHATE DEHYDROGENASE"/>
    <property type="match status" value="1"/>
</dbReference>
<dbReference type="PANTHER" id="PTHR11985:SF15">
    <property type="entry name" value="GLYCEROL-3-PHOSPHATE DEHYDROGENASE, MITOCHONDRIAL"/>
    <property type="match status" value="1"/>
</dbReference>
<dbReference type="Pfam" id="PF01266">
    <property type="entry name" value="DAO"/>
    <property type="match status" value="1"/>
</dbReference>
<dbReference type="Pfam" id="PF16901">
    <property type="entry name" value="DAO_C"/>
    <property type="match status" value="1"/>
</dbReference>
<dbReference type="Pfam" id="PF13499">
    <property type="entry name" value="EF-hand_7"/>
    <property type="match status" value="1"/>
</dbReference>
<dbReference type="PRINTS" id="PR01001">
    <property type="entry name" value="FADG3PDH"/>
</dbReference>
<dbReference type="SMART" id="SM00054">
    <property type="entry name" value="EFh"/>
    <property type="match status" value="2"/>
</dbReference>
<dbReference type="SUPFAM" id="SSF47473">
    <property type="entry name" value="EF-hand"/>
    <property type="match status" value="1"/>
</dbReference>
<dbReference type="SUPFAM" id="SSF54373">
    <property type="entry name" value="FAD-linked reductases, C-terminal domain"/>
    <property type="match status" value="1"/>
</dbReference>
<dbReference type="SUPFAM" id="SSF51905">
    <property type="entry name" value="FAD/NAD(P)-binding domain"/>
    <property type="match status" value="1"/>
</dbReference>
<dbReference type="PROSITE" id="PS00018">
    <property type="entry name" value="EF_HAND_1"/>
    <property type="match status" value="1"/>
</dbReference>
<dbReference type="PROSITE" id="PS50222">
    <property type="entry name" value="EF_HAND_2"/>
    <property type="match status" value="2"/>
</dbReference>
<dbReference type="PROSITE" id="PS00977">
    <property type="entry name" value="FAD_G3PDH_1"/>
    <property type="match status" value="1"/>
</dbReference>
<dbReference type="PROSITE" id="PS00978">
    <property type="entry name" value="FAD_G3PDH_2"/>
    <property type="match status" value="1"/>
</dbReference>
<proteinExistence type="evidence at transcript level"/>
<organism>
    <name type="scientific">Macaca fascicularis</name>
    <name type="common">Crab-eating macaque</name>
    <name type="synonym">Cynomolgus monkey</name>
    <dbReference type="NCBI Taxonomy" id="9541"/>
    <lineage>
        <taxon>Eukaryota</taxon>
        <taxon>Metazoa</taxon>
        <taxon>Chordata</taxon>
        <taxon>Craniata</taxon>
        <taxon>Vertebrata</taxon>
        <taxon>Euteleostomi</taxon>
        <taxon>Mammalia</taxon>
        <taxon>Eutheria</taxon>
        <taxon>Euarchontoglires</taxon>
        <taxon>Primates</taxon>
        <taxon>Haplorrhini</taxon>
        <taxon>Catarrhini</taxon>
        <taxon>Cercopithecidae</taxon>
        <taxon>Cercopithecinae</taxon>
        <taxon>Macaca</taxon>
    </lineage>
</organism>
<gene>
    <name type="primary">GPD2</name>
    <name type="ORF">QtsA-16270</name>
</gene>
<name>GPDM_MACFA</name>
<sequence length="727" mass="80801">MAFQKAVKGTILVGGGALATVLGLSQFAHYRRKQMNLAYVKAADYISEPVNREPPSREAQLLTLQNTSEFDILVIGGGATGSGCALDAVTRGLKTALVERDDFSSGTSSRSTKLIHGGVRYLQKAIMKLDIEQYRMVKEALHERANLLEIAPHLSAPLPIVLPVYKWWQLPYYWVGIKLYDLVAGSNCLKSSYVLSKSRALEHFPMLQKDKLVGAIVYYDGQHNDARMNLAIALTAARYGAATANYMEVVSLLKKTDPQTGKVRVSGARCKDVLTGQEFDVRAKCVINATGPFTDSVRKMDDKDAAAICQPSAGVHIVMPGYYSPESMGLLDPATSDGRVIFFLPWQKMTIAGTTDTPTDVTPHPIPSEEDINFILNEVRNYLSCDVEVRRGDVLAAWSGIRPLVTDPKSADTQSISRNHVVDISESGLITIAGGKWTTYRSMAEDTINAAIKTHNLKAGPSRTVGLFLQGGKDWSPTLYIRLVQDYGLESEVAQHLAATYGDKAFEVAKMASVTGKRWPIVGVRLVSEFPYIEAEVKYGIKEYACTAVDMISRRTRLAFLNVQAAEEALPRIVELMGRELNWDDHKKQEQLETAKKFLYYEMGYKSRSEQLTDRSEISLLPSDIDRYKKRFHKFDADKKGFITIVDVQRVLESINVQMDENTLHEILNEVDLNKNGQVELNEFLQLMSAIQKGRVSGSRLAILMKTAEENLDRRVPIPVDRSCGGL</sequence>